<organism>
    <name type="scientific">Gallus gallus</name>
    <name type="common">Chicken</name>
    <dbReference type="NCBI Taxonomy" id="9031"/>
    <lineage>
        <taxon>Eukaryota</taxon>
        <taxon>Metazoa</taxon>
        <taxon>Chordata</taxon>
        <taxon>Craniata</taxon>
        <taxon>Vertebrata</taxon>
        <taxon>Euteleostomi</taxon>
        <taxon>Archelosauria</taxon>
        <taxon>Archosauria</taxon>
        <taxon>Dinosauria</taxon>
        <taxon>Saurischia</taxon>
        <taxon>Theropoda</taxon>
        <taxon>Coelurosauria</taxon>
        <taxon>Aves</taxon>
        <taxon>Neognathae</taxon>
        <taxon>Galloanserae</taxon>
        <taxon>Galliformes</taxon>
        <taxon>Phasianidae</taxon>
        <taxon>Phasianinae</taxon>
        <taxon>Gallus</taxon>
    </lineage>
</organism>
<proteinExistence type="evidence at protein level"/>
<feature type="signal peptide" evidence="6 8">
    <location>
        <begin position="1"/>
        <end position="33"/>
    </location>
</feature>
<feature type="chain" id="PRO_0000014662" description="CD166 antigen">
    <location>
        <begin position="34"/>
        <end position="588"/>
    </location>
</feature>
<feature type="topological domain" description="Extracellular" evidence="3">
    <location>
        <begin position="34"/>
        <end position="532"/>
    </location>
</feature>
<feature type="transmembrane region" description="Helical" evidence="3">
    <location>
        <begin position="533"/>
        <end position="553"/>
    </location>
</feature>
<feature type="topological domain" description="Cytoplasmic" evidence="3">
    <location>
        <begin position="554"/>
        <end position="588"/>
    </location>
</feature>
<feature type="domain" description="Ig-like V-type 1">
    <location>
        <begin position="34"/>
        <end position="126"/>
    </location>
</feature>
<feature type="domain" description="Ig-like V-type 2">
    <location>
        <begin position="131"/>
        <end position="240"/>
    </location>
</feature>
<feature type="domain" description="Ig-like C2-type 1">
    <location>
        <begin position="251"/>
        <end position="333"/>
    </location>
</feature>
<feature type="domain" description="Ig-like C2-type 2">
    <location>
        <begin position="338"/>
        <end position="414"/>
    </location>
</feature>
<feature type="domain" description="Ig-like C2-type 3">
    <location>
        <begin position="421"/>
        <end position="501"/>
    </location>
</feature>
<feature type="glycosylation site" description="N-linked (GlcNAc...) asparagine" evidence="3">
    <location>
        <position position="101"/>
    </location>
</feature>
<feature type="glycosylation site" description="N-linked (GlcNAc...) asparagine" evidence="3">
    <location>
        <position position="173"/>
    </location>
</feature>
<feature type="glycosylation site" description="N-linked (GlcNAc...) asparagine" evidence="3">
    <location>
        <position position="199"/>
    </location>
</feature>
<feature type="glycosylation site" description="N-linked (GlcNAc...) asparagine" evidence="3">
    <location>
        <position position="271"/>
    </location>
</feature>
<feature type="glycosylation site" description="N-linked (GlcNAc...) asparagine" evidence="3">
    <location>
        <position position="312"/>
    </location>
</feature>
<feature type="glycosylation site" description="N-linked (GlcNAc...) asparagine" evidence="3">
    <location>
        <position position="366"/>
    </location>
</feature>
<feature type="glycosylation site" description="N-linked (GlcNAc...) asparagine" evidence="3">
    <location>
        <position position="462"/>
    </location>
</feature>
<feature type="glycosylation site" description="N-linked (GlcNAc...) asparagine" evidence="3">
    <location>
        <position position="485"/>
    </location>
</feature>
<feature type="glycosylation site" description="N-linked (GlcNAc...) asparagine" evidence="3">
    <location>
        <position position="504"/>
    </location>
</feature>
<feature type="disulfide bond" evidence="4">
    <location>
        <begin position="49"/>
        <end position="119"/>
    </location>
</feature>
<feature type="disulfide bond" evidence="4">
    <location>
        <begin position="163"/>
        <end position="226"/>
    </location>
</feature>
<feature type="disulfide bond" evidence="4">
    <location>
        <begin position="276"/>
        <end position="319"/>
    </location>
</feature>
<feature type="disulfide bond" evidence="4">
    <location>
        <begin position="359"/>
        <end position="397"/>
    </location>
</feature>
<feature type="disulfide bond" evidence="4">
    <location>
        <begin position="440"/>
        <end position="490"/>
    </location>
</feature>
<feature type="sequence conflict" description="In Ref. 3; AA sequence." evidence="13" ref="3">
    <original>MMEPPAAAAR</original>
    <variation>MEPPSRRRP</variation>
    <location>
        <begin position="1"/>
        <end position="10"/>
    </location>
</feature>
<feature type="sequence conflict" description="In Ref. 3; AAA48602." evidence="13" ref="3">
    <original>A</original>
    <variation>S</variation>
    <location>
        <position position="25"/>
    </location>
</feature>
<feature type="sequence conflict" description="In Ref. 3; AAA48602." evidence="13" ref="3">
    <original>SD</original>
    <variation>RH</variation>
    <location>
        <begin position="112"/>
        <end position="113"/>
    </location>
</feature>
<feature type="sequence conflict" description="In Ref. 2; CAA45579." evidence="13" ref="2">
    <original>A</original>
    <variation>T</variation>
    <location>
        <position position="329"/>
    </location>
</feature>
<feature type="sequence conflict" description="In Ref. 2; CAA45579." evidence="13" ref="2">
    <original>LQ</original>
    <variation>HK</variation>
    <location>
        <begin position="401"/>
        <end position="402"/>
    </location>
</feature>
<protein>
    <recommendedName>
        <fullName>CD166 antigen</fullName>
    </recommendedName>
    <alternativeName>
        <fullName>Activated leukocyte cell adhesion molecule</fullName>
    </alternativeName>
    <alternativeName>
        <fullName evidence="10 11">BEN glycoprotein</fullName>
    </alternativeName>
    <alternativeName>
        <fullName evidence="12">Protein DM-GRASP</fullName>
    </alternativeName>
    <alternativeName>
        <fullName>Protein JC7</fullName>
    </alternativeName>
    <alternativeName>
        <fullName>SC1 glycoprotein</fullName>
    </alternativeName>
    <cdAntigenName>CD166</cdAntigenName>
</protein>
<dbReference type="EMBL" id="S63276">
    <property type="protein sequence ID" value="AAB20170.1"/>
    <property type="molecule type" value="mRNA"/>
</dbReference>
<dbReference type="EMBL" id="M76678">
    <property type="protein sequence ID" value="AAA48602.1"/>
    <property type="molecule type" value="mRNA"/>
</dbReference>
<dbReference type="EMBL" id="X64301">
    <property type="protein sequence ID" value="CAA45579.1"/>
    <property type="molecule type" value="mRNA"/>
</dbReference>
<dbReference type="PIR" id="A45254">
    <property type="entry name" value="A45254"/>
</dbReference>
<dbReference type="PIR" id="JH0464">
    <property type="entry name" value="JH0464"/>
</dbReference>
<dbReference type="PIR" id="JH0506">
    <property type="entry name" value="JH0506"/>
</dbReference>
<dbReference type="RefSeq" id="NP_990510.1">
    <property type="nucleotide sequence ID" value="NM_205179.1"/>
</dbReference>
<dbReference type="SMR" id="P42292"/>
<dbReference type="FunCoup" id="P42292">
    <property type="interactions" value="692"/>
</dbReference>
<dbReference type="STRING" id="9031.ENSGALP00000072355"/>
<dbReference type="GlyCosmos" id="P42292">
    <property type="glycosylation" value="9 sites, No reported glycans"/>
</dbReference>
<dbReference type="GlyGen" id="P42292">
    <property type="glycosylation" value="9 sites"/>
</dbReference>
<dbReference type="PaxDb" id="9031-ENSGALP00000024723"/>
<dbReference type="GeneID" id="396092"/>
<dbReference type="KEGG" id="gga:396092"/>
<dbReference type="CTD" id="214"/>
<dbReference type="VEuPathDB" id="HostDB:geneid_396092"/>
<dbReference type="eggNOG" id="ENOG502RMQM">
    <property type="taxonomic scope" value="Eukaryota"/>
</dbReference>
<dbReference type="HOGENOM" id="CLU_028888_2_0_1"/>
<dbReference type="InParanoid" id="P42292"/>
<dbReference type="OrthoDB" id="9945628at2759"/>
<dbReference type="PhylomeDB" id="P42292"/>
<dbReference type="PRO" id="PR:P42292"/>
<dbReference type="Proteomes" id="UP000000539">
    <property type="component" value="Chromosome 1"/>
</dbReference>
<dbReference type="Bgee" id="ENSGALG00000015348">
    <property type="expression patterns" value="Expressed in brain and 13 other cell types or tissues"/>
</dbReference>
<dbReference type="GO" id="GO:0030424">
    <property type="term" value="C:axon"/>
    <property type="evidence" value="ECO:0000314"/>
    <property type="project" value="UniProtKB"/>
</dbReference>
<dbReference type="GO" id="GO:0030425">
    <property type="term" value="C:dendrite"/>
    <property type="evidence" value="ECO:0007669"/>
    <property type="project" value="UniProtKB-SubCell"/>
</dbReference>
<dbReference type="GO" id="GO:0001772">
    <property type="term" value="C:immunological synapse"/>
    <property type="evidence" value="ECO:0000250"/>
    <property type="project" value="UniProtKB"/>
</dbReference>
<dbReference type="GO" id="GO:0005886">
    <property type="term" value="C:plasma membrane"/>
    <property type="evidence" value="ECO:0000314"/>
    <property type="project" value="UniProtKB"/>
</dbReference>
<dbReference type="GO" id="GO:0042802">
    <property type="term" value="F:identical protein binding"/>
    <property type="evidence" value="ECO:0000314"/>
    <property type="project" value="AgBase"/>
</dbReference>
<dbReference type="GO" id="GO:0002250">
    <property type="term" value="P:adaptive immune response"/>
    <property type="evidence" value="ECO:0007669"/>
    <property type="project" value="UniProtKB-KW"/>
</dbReference>
<dbReference type="GO" id="GO:0048846">
    <property type="term" value="P:axon extension involved in axon guidance"/>
    <property type="evidence" value="ECO:0000314"/>
    <property type="project" value="UniProtKB"/>
</dbReference>
<dbReference type="GO" id="GO:0007155">
    <property type="term" value="P:cell adhesion"/>
    <property type="evidence" value="ECO:0000315"/>
    <property type="project" value="UniProtKB"/>
</dbReference>
<dbReference type="GO" id="GO:0098743">
    <property type="term" value="P:cell aggregation"/>
    <property type="evidence" value="ECO:0000314"/>
    <property type="project" value="AgBase"/>
</dbReference>
<dbReference type="GO" id="GO:0007157">
    <property type="term" value="P:heterophilic cell-cell adhesion via plasma membrane cell adhesion molecules"/>
    <property type="evidence" value="ECO:0000250"/>
    <property type="project" value="UniProtKB"/>
</dbReference>
<dbReference type="GO" id="GO:0007156">
    <property type="term" value="P:homophilic cell adhesion via plasma membrane adhesion molecules"/>
    <property type="evidence" value="ECO:0000314"/>
    <property type="project" value="AgBase"/>
</dbReference>
<dbReference type="GO" id="GO:1990138">
    <property type="term" value="P:neuron projection extension"/>
    <property type="evidence" value="ECO:0000315"/>
    <property type="project" value="UniProtKB"/>
</dbReference>
<dbReference type="GO" id="GO:0031290">
    <property type="term" value="P:retinal ganglion cell axon guidance"/>
    <property type="evidence" value="ECO:0000314"/>
    <property type="project" value="UniProtKB"/>
</dbReference>
<dbReference type="CDD" id="cd00096">
    <property type="entry name" value="Ig"/>
    <property type="match status" value="1"/>
</dbReference>
<dbReference type="CDD" id="cd00098">
    <property type="entry name" value="IgC1"/>
    <property type="match status" value="1"/>
</dbReference>
<dbReference type="FunFam" id="2.60.40.10:FF:001428">
    <property type="entry name" value="CD166 antigen"/>
    <property type="match status" value="1"/>
</dbReference>
<dbReference type="FunFam" id="2.60.40.10:FF:000351">
    <property type="entry name" value="CD166 antigen isoform X1"/>
    <property type="match status" value="1"/>
</dbReference>
<dbReference type="FunFam" id="2.60.40.10:FF:000384">
    <property type="entry name" value="CD166 antigen isoform X1"/>
    <property type="match status" value="1"/>
</dbReference>
<dbReference type="Gene3D" id="2.60.40.10">
    <property type="entry name" value="Immunoglobulins"/>
    <property type="match status" value="5"/>
</dbReference>
<dbReference type="InterPro" id="IPR013162">
    <property type="entry name" value="CD80_C2-set"/>
</dbReference>
<dbReference type="InterPro" id="IPR007110">
    <property type="entry name" value="Ig-like_dom"/>
</dbReference>
<dbReference type="InterPro" id="IPR036179">
    <property type="entry name" value="Ig-like_dom_sf"/>
</dbReference>
<dbReference type="InterPro" id="IPR013783">
    <property type="entry name" value="Ig-like_fold"/>
</dbReference>
<dbReference type="InterPro" id="IPR003599">
    <property type="entry name" value="Ig_sub"/>
</dbReference>
<dbReference type="InterPro" id="IPR013106">
    <property type="entry name" value="Ig_V-set"/>
</dbReference>
<dbReference type="InterPro" id="IPR051116">
    <property type="entry name" value="Surface_Rcpt/Adhesion_Mol"/>
</dbReference>
<dbReference type="PANTHER" id="PTHR11973:SF2">
    <property type="entry name" value="CD166 ANTIGEN"/>
    <property type="match status" value="1"/>
</dbReference>
<dbReference type="PANTHER" id="PTHR11973">
    <property type="entry name" value="CELL SURFACE GLYCOPROTEIN MUC18-RELATED"/>
    <property type="match status" value="1"/>
</dbReference>
<dbReference type="Pfam" id="PF08205">
    <property type="entry name" value="C2-set_2"/>
    <property type="match status" value="1"/>
</dbReference>
<dbReference type="Pfam" id="PF13895">
    <property type="entry name" value="Ig_2"/>
    <property type="match status" value="1"/>
</dbReference>
<dbReference type="Pfam" id="PF13927">
    <property type="entry name" value="Ig_3"/>
    <property type="match status" value="1"/>
</dbReference>
<dbReference type="SMART" id="SM00409">
    <property type="entry name" value="IG"/>
    <property type="match status" value="3"/>
</dbReference>
<dbReference type="SMART" id="SM00406">
    <property type="entry name" value="IGv"/>
    <property type="match status" value="2"/>
</dbReference>
<dbReference type="SUPFAM" id="SSF48726">
    <property type="entry name" value="Immunoglobulin"/>
    <property type="match status" value="4"/>
</dbReference>
<dbReference type="PROSITE" id="PS50835">
    <property type="entry name" value="IG_LIKE"/>
    <property type="match status" value="4"/>
</dbReference>
<sequence>MMEPPAAAARASCRRRPLLCLLLAALCMPPALGLYTVNAVYGDTITMPCRLEVPDGLMFGKWKYEMPNGSPVFIAFRSSTKKNVQYDDVPDYKDRLSLSENYTLSIKNARISDEKRFVCMLVTEDDVSEEPTVVKVFKQPSQPEILHQADFLETEKLKMLGECVVRDSYPEGNVTWYKNGRVLQPVEEVVVINLRKVENRSTGLFTMTSSLQYMPTKEDANAKFTCIVTYHGPSGQKTIQSEPVVFDVHYPTEKVTIRVLSQSSTIKEGDNVTLKCSGNGNPPPQEFLFYIPGETEGIRSSDTYVMTDVRRNATGEYKCSLIDKSMMDATTITVHYLDLQLTPSGEVTKQIGEALPVSCTISSSRNATVFWIKDNTRMKTSPSFSSLQYQDAGNYICETTLQEVEGLKKRKTLKLIVEGKPQIKMTKKTNTNKMSKTIVCHVEGFPKPAVQWTVTGSGSLINKTEETKYVNGKFSSKIIIAPEENVTLTCIAENELERTVTSLNVSAISIPEYDEPEDRNDDNSEKVNDQAKLIVGIVVGLLLVALVAGVVYWLYVKKSKTASKHVDKDLGNIEENKKLEENNHKSET</sequence>
<name>CD166_CHICK</name>
<gene>
    <name type="primary">ALCAM</name>
</gene>
<accession>P42292</accession>
<evidence type="ECO:0000250" key="1">
    <source>
        <dbReference type="UniProtKB" id="Q13740"/>
    </source>
</evidence>
<evidence type="ECO:0000250" key="2">
    <source>
        <dbReference type="UniProtKB" id="Q61490"/>
    </source>
</evidence>
<evidence type="ECO:0000255" key="3"/>
<evidence type="ECO:0000255" key="4">
    <source>
        <dbReference type="PROSITE-ProRule" id="PRU00114"/>
    </source>
</evidence>
<evidence type="ECO:0000269" key="5">
    <source>
    </source>
</evidence>
<evidence type="ECO:0000269" key="6">
    <source>
    </source>
</evidence>
<evidence type="ECO:0000269" key="7">
    <source>
    </source>
</evidence>
<evidence type="ECO:0000269" key="8">
    <source>
    </source>
</evidence>
<evidence type="ECO:0000269" key="9">
    <source>
    </source>
</evidence>
<evidence type="ECO:0000303" key="10">
    <source>
    </source>
</evidence>
<evidence type="ECO:0000303" key="11">
    <source>
    </source>
</evidence>
<evidence type="ECO:0000303" key="12">
    <source>
    </source>
</evidence>
<evidence type="ECO:0000305" key="13"/>
<comment type="function">
    <text evidence="1 2 7 8 9">Cell adhesion molecule that mediates both heterotypic cell-cell contacts via its interaction with CD6, as well as homotypic cell-cell contacts. Promotes T-cell activation and proliferation via its interactions with CD6 (By similarity). Contributes to the formation and maturation of the immunological synapse via its interactions with CD6 (By similarity). Mediates homotypic interactions with cells that express ALCAM (PubMed:1931049, PubMed:22421359). Mediates attachment of dendritic cells onto endothelial cells via homotypic interaction. Inhibits endothelial cell migration and promotes endothelial tube formation via homotypic interactions. Required for normal organization of the lymph vessel network. Required for normal hematopoietic stem cell engraftment in the bone marrow. Plays a role in hematopoiesis; required for normal numbers of hematopoietic stem cells in bone marrow. Promotes in vitro osteoblast proliferation and differentiation (By similarity). Promotes neurite extension, axon growth and axon guidance; axons grow preferentially on surfaces that contain ALCAM (PubMed:1873027, PubMed:22421359). Mediates outgrowth and pathfinding for retinal ganglion cell axons (PubMed:22421359).</text>
</comment>
<comment type="subunit">
    <text evidence="1">Homodimer. Interacts (via extracellular domain) with CD6 (via extracellular domain). Homodimerization and interaction with CD6 involve the same region and cannot occur simultaneously. The affinity for CD6 is much higher than the affinity for self-association.</text>
</comment>
<comment type="subcellular location">
    <subcellularLocation>
        <location evidence="6 7 8 9">Cell membrane</location>
        <topology evidence="2">Single-pass type I membrane protein</topology>
    </subcellularLocation>
    <subcellularLocation>
        <location evidence="7 9">Cell projection</location>
        <location evidence="7 9">Axon</location>
    </subcellularLocation>
    <subcellularLocation>
        <location evidence="2">Cell projection</location>
        <location evidence="2">Dendrite</location>
    </subcellularLocation>
    <text evidence="1">Detected at the immunological synapse, i.e, at the contact zone between antigen-presenting dendritic cells and T-cells. Colocalizes with CD6 and the TCR/CD3 complex at the immunological synapse.</text>
</comment>
<comment type="tissue specificity">
    <text evidence="5 6 7 8 9">Detected in embryo (PubMed:1608932, PubMed:1931049). Detected in embryonic spinal cord and embryonic brain (PubMed:1313497, PubMed:1873027). Within the spinal cord it is localized to axons in the dorsal funiculus, midline floor plate cells, and motoneurons (PubMed:1873027). Detected in embryonic epithelia and brain (PubMed:1608932). After hatching, detected in bursa of Fabricius and thymus (PubMed:1608932). Detected on embryonic retinal ganglion cell axon growth cones (at protein level) (PubMed:22421359). Detected in embryonic retina and in the optic fiber layer, which is composed of retinal ganglion cell axons and their growth cones (PubMed:22421359).</text>
</comment>
<comment type="developmental stage">
    <text evidence="6 8">Widely expressed during embryonic development.</text>
</comment>
<comment type="domain">
    <text evidence="1">The CD6 binding site is located in the N-terminal Ig-like domain.</text>
</comment>
<comment type="PTM">
    <text evidence="6 7">Glycosylated.</text>
</comment>
<keyword id="KW-1064">Adaptive immunity</keyword>
<keyword id="KW-0130">Cell adhesion</keyword>
<keyword id="KW-1003">Cell membrane</keyword>
<keyword id="KW-0966">Cell projection</keyword>
<keyword id="KW-0903">Direct protein sequencing</keyword>
<keyword id="KW-1015">Disulfide bond</keyword>
<keyword id="KW-0325">Glycoprotein</keyword>
<keyword id="KW-0391">Immunity</keyword>
<keyword id="KW-0393">Immunoglobulin domain</keyword>
<keyword id="KW-0472">Membrane</keyword>
<keyword id="KW-1185">Reference proteome</keyword>
<keyword id="KW-0677">Repeat</keyword>
<keyword id="KW-0732">Signal</keyword>
<keyword id="KW-0812">Transmembrane</keyword>
<keyword id="KW-1133">Transmembrane helix</keyword>
<reference key="1">
    <citation type="journal article" date="1991" name="Neuron">
        <title>Molecular cloning and expression of a novel adhesion molecule, SC1.</title>
        <authorList>
            <person name="Tanaka H."/>
            <person name="Matsui T."/>
            <person name="Agata A."/>
            <person name="Tomura M."/>
            <person name="Kubota I."/>
            <person name="McFarland K.C."/>
            <person name="Kohr B."/>
            <person name="Lee A."/>
            <person name="Phillips H.S."/>
            <person name="Shelton D.L."/>
        </authorList>
    </citation>
    <scope>NUCLEOTIDE SEQUENCE [MRNA]</scope>
    <scope>FUNCTION</scope>
    <scope>PROTEIN SEQUENCE OF 34-53</scope>
    <scope>SUBCELLULAR LOCATION</scope>
    <scope>TISSUE SPECIFICITY</scope>
    <scope>DEVELOPMENTAL STAGE</scope>
    <source>
        <tissue>Embryo</tissue>
    </source>
</reference>
<reference key="2">
    <citation type="journal article" date="1991" name="Neuron">
        <title>DM-GRASP, a novel immunoglobulin superfamily axonal surface protein that supports neurite extension.</title>
        <authorList>
            <person name="Burns F.R."/>
            <person name="von Kannen S."/>
            <person name="Guy L."/>
            <person name="Raper J.A."/>
            <person name="Kamholz J."/>
            <person name="Chang S."/>
        </authorList>
    </citation>
    <scope>NUCLEOTIDE SEQUENCE [MRNA]</scope>
    <scope>FUNCTION</scope>
    <scope>TISSUE SPECIFICITY</scope>
    <scope>SUBCELLULAR LOCATION</scope>
    <scope>GLYCOSYLATION</scope>
</reference>
<reference key="3">
    <citation type="journal article" date="1992" name="Proc. Natl. Acad. Sci. U.S.A.">
        <title>BEN, a surface glycoprotein of the immunoglobulin superfamily, is expressed in a variety of developing systems.</title>
        <authorList>
            <person name="Pourquie O."/>
            <person name="Corbel C."/>
            <person name="Le Caer J.-P."/>
            <person name="Rossier J."/>
            <person name="le Douarin N.M."/>
        </authorList>
    </citation>
    <scope>NUCLEOTIDE SEQUENCE [MRNA]</scope>
    <scope>PROTEIN SEQUENCE OF 34-52; 87-93; 504-512 AND 569-582</scope>
    <scope>SUBCELLULAR LOCATION</scope>
    <scope>TISSUE SPECIFICITY</scope>
    <scope>GLYCOSYLATION</scope>
    <source>
        <tissue>Bursa of Fabricius</tissue>
    </source>
</reference>
<reference key="4">
    <citation type="journal article" date="1992" name="J. Neurosci.">
        <title>Association of BEN glycoprotein expression with climbing fiber axonogenesis in the avian cerebellum.</title>
        <authorList>
            <person name="Pourquie O."/>
            <person name="Hallonet M.E.R."/>
            <person name="le Douarin N.M."/>
        </authorList>
    </citation>
    <scope>POSSIBLE FUNCTION</scope>
    <scope>TISSUE SPECIFICITY</scope>
</reference>
<reference key="5">
    <citation type="journal article" date="2012" name="J. Cell Sci.">
        <title>Translation of the cell adhesion molecule ALCAM in axonal growth cones - regulation and functional importance.</title>
        <authorList>
            <person name="Thelen K."/>
            <person name="Maier B."/>
            <person name="Faber M."/>
            <person name="Albrecht C."/>
            <person name="Fischer P."/>
            <person name="Pollerberg G.E."/>
        </authorList>
    </citation>
    <scope>FUNCTION</scope>
    <scope>SUBCELLULAR LOCATION</scope>
    <scope>TISSUE SPECIFICITY</scope>
</reference>